<organism>
    <name type="scientific">Shewanella sp. (strain W3-18-1)</name>
    <dbReference type="NCBI Taxonomy" id="351745"/>
    <lineage>
        <taxon>Bacteria</taxon>
        <taxon>Pseudomonadati</taxon>
        <taxon>Pseudomonadota</taxon>
        <taxon>Gammaproteobacteria</taxon>
        <taxon>Alteromonadales</taxon>
        <taxon>Shewanellaceae</taxon>
        <taxon>Shewanella</taxon>
    </lineage>
</organism>
<comment type="function">
    <text evidence="1">O-methyltransferase that catalyzes the 2 O-methylation steps in the ubiquinone biosynthetic pathway.</text>
</comment>
<comment type="catalytic activity">
    <reaction evidence="1">
        <text>a 3-demethylubiquinol + S-adenosyl-L-methionine = a ubiquinol + S-adenosyl-L-homocysteine + H(+)</text>
        <dbReference type="Rhea" id="RHEA:44380"/>
        <dbReference type="Rhea" id="RHEA-COMP:9566"/>
        <dbReference type="Rhea" id="RHEA-COMP:10914"/>
        <dbReference type="ChEBI" id="CHEBI:15378"/>
        <dbReference type="ChEBI" id="CHEBI:17976"/>
        <dbReference type="ChEBI" id="CHEBI:57856"/>
        <dbReference type="ChEBI" id="CHEBI:59789"/>
        <dbReference type="ChEBI" id="CHEBI:84422"/>
        <dbReference type="EC" id="2.1.1.64"/>
    </reaction>
</comment>
<comment type="catalytic activity">
    <reaction evidence="1">
        <text>a 3-(all-trans-polyprenyl)benzene-1,2-diol + S-adenosyl-L-methionine = a 2-methoxy-6-(all-trans-polyprenyl)phenol + S-adenosyl-L-homocysteine + H(+)</text>
        <dbReference type="Rhea" id="RHEA:31411"/>
        <dbReference type="Rhea" id="RHEA-COMP:9550"/>
        <dbReference type="Rhea" id="RHEA-COMP:9551"/>
        <dbReference type="ChEBI" id="CHEBI:15378"/>
        <dbReference type="ChEBI" id="CHEBI:57856"/>
        <dbReference type="ChEBI" id="CHEBI:59789"/>
        <dbReference type="ChEBI" id="CHEBI:62729"/>
        <dbReference type="ChEBI" id="CHEBI:62731"/>
        <dbReference type="EC" id="2.1.1.222"/>
    </reaction>
</comment>
<comment type="pathway">
    <text evidence="1">Cofactor biosynthesis; ubiquinone biosynthesis.</text>
</comment>
<comment type="similarity">
    <text evidence="1">Belongs to the methyltransferase superfamily. UbiG/COQ3 family.</text>
</comment>
<gene>
    <name evidence="1" type="primary">ubiG</name>
    <name type="ordered locus">Sputw3181_1941</name>
</gene>
<sequence length="236" mass="26407">MQHNTNVDPQEIAKFERMAETWWDLNGEFKPLHLLNPLRLNYIDQTTGGIFGKKVLDVGCGGGILSESMARIGAEVDGLDMGEEPLEVARLHALETGVNITYVKNTAEAHSQDHQGYYDVVTCMEMLEHVPNPQSVIKACCDMVKPGGFVFFSTINRNLRSYVETILGAEYLLKMLPVGTHDHNKFIKPSELIELVDNTDLICKDAVGITYNPLTGIFKYTPRVDVNYMIATQKVD</sequence>
<protein>
    <recommendedName>
        <fullName evidence="1">Ubiquinone biosynthesis O-methyltransferase</fullName>
    </recommendedName>
    <alternativeName>
        <fullName evidence="1">2-polyprenyl-6-hydroxyphenol methylase</fullName>
        <ecNumber evidence="1">2.1.1.222</ecNumber>
    </alternativeName>
    <alternativeName>
        <fullName evidence="1">3-demethylubiquinone 3-O-methyltransferase</fullName>
        <ecNumber evidence="1">2.1.1.64</ecNumber>
    </alternativeName>
</protein>
<evidence type="ECO:0000255" key="1">
    <source>
        <dbReference type="HAMAP-Rule" id="MF_00472"/>
    </source>
</evidence>
<keyword id="KW-0489">Methyltransferase</keyword>
<keyword id="KW-0949">S-adenosyl-L-methionine</keyword>
<keyword id="KW-0808">Transferase</keyword>
<keyword id="KW-0831">Ubiquinone biosynthesis</keyword>
<proteinExistence type="inferred from homology"/>
<accession>A1RJD1</accession>
<feature type="chain" id="PRO_1000013927" description="Ubiquinone biosynthesis O-methyltransferase">
    <location>
        <begin position="1"/>
        <end position="236"/>
    </location>
</feature>
<feature type="binding site" evidence="1">
    <location>
        <position position="39"/>
    </location>
    <ligand>
        <name>S-adenosyl-L-methionine</name>
        <dbReference type="ChEBI" id="CHEBI:59789"/>
    </ligand>
</feature>
<feature type="binding site" evidence="1">
    <location>
        <position position="59"/>
    </location>
    <ligand>
        <name>S-adenosyl-L-methionine</name>
        <dbReference type="ChEBI" id="CHEBI:59789"/>
    </ligand>
</feature>
<feature type="binding site" evidence="1">
    <location>
        <position position="80"/>
    </location>
    <ligand>
        <name>S-adenosyl-L-methionine</name>
        <dbReference type="ChEBI" id="CHEBI:59789"/>
    </ligand>
</feature>
<feature type="binding site" evidence="1">
    <location>
        <position position="124"/>
    </location>
    <ligand>
        <name>S-adenosyl-L-methionine</name>
        <dbReference type="ChEBI" id="CHEBI:59789"/>
    </ligand>
</feature>
<reference key="1">
    <citation type="submission" date="2006-12" db="EMBL/GenBank/DDBJ databases">
        <title>Complete sequence of Shewanella sp. W3-18-1.</title>
        <authorList>
            <consortium name="US DOE Joint Genome Institute"/>
            <person name="Copeland A."/>
            <person name="Lucas S."/>
            <person name="Lapidus A."/>
            <person name="Barry K."/>
            <person name="Detter J.C."/>
            <person name="Glavina del Rio T."/>
            <person name="Hammon N."/>
            <person name="Israni S."/>
            <person name="Dalin E."/>
            <person name="Tice H."/>
            <person name="Pitluck S."/>
            <person name="Chain P."/>
            <person name="Malfatti S."/>
            <person name="Shin M."/>
            <person name="Vergez L."/>
            <person name="Schmutz J."/>
            <person name="Larimer F."/>
            <person name="Land M."/>
            <person name="Hauser L."/>
            <person name="Kyrpides N."/>
            <person name="Lykidis A."/>
            <person name="Tiedje J."/>
            <person name="Richardson P."/>
        </authorList>
    </citation>
    <scope>NUCLEOTIDE SEQUENCE [LARGE SCALE GENOMIC DNA]</scope>
    <source>
        <strain>W3-18-1</strain>
    </source>
</reference>
<dbReference type="EC" id="2.1.1.222" evidence="1"/>
<dbReference type="EC" id="2.1.1.64" evidence="1"/>
<dbReference type="EMBL" id="CP000503">
    <property type="protein sequence ID" value="ABM24776.1"/>
    <property type="molecule type" value="Genomic_DNA"/>
</dbReference>
<dbReference type="RefSeq" id="WP_011789267.1">
    <property type="nucleotide sequence ID" value="NC_008750.1"/>
</dbReference>
<dbReference type="SMR" id="A1RJD1"/>
<dbReference type="KEGG" id="shw:Sputw3181_1941"/>
<dbReference type="HOGENOM" id="CLU_042432_5_0_6"/>
<dbReference type="UniPathway" id="UPA00232"/>
<dbReference type="Proteomes" id="UP000002597">
    <property type="component" value="Chromosome"/>
</dbReference>
<dbReference type="GO" id="GO:0102208">
    <property type="term" value="F:2-polyprenyl-6-hydroxyphenol methylase activity"/>
    <property type="evidence" value="ECO:0007669"/>
    <property type="project" value="UniProtKB-EC"/>
</dbReference>
<dbReference type="GO" id="GO:0061542">
    <property type="term" value="F:3-demethylubiquinol 3-O-methyltransferase activity"/>
    <property type="evidence" value="ECO:0007669"/>
    <property type="project" value="UniProtKB-UniRule"/>
</dbReference>
<dbReference type="GO" id="GO:0010420">
    <property type="term" value="F:polyprenyldihydroxybenzoate methyltransferase activity"/>
    <property type="evidence" value="ECO:0007669"/>
    <property type="project" value="InterPro"/>
</dbReference>
<dbReference type="GO" id="GO:0032259">
    <property type="term" value="P:methylation"/>
    <property type="evidence" value="ECO:0007669"/>
    <property type="project" value="UniProtKB-KW"/>
</dbReference>
<dbReference type="CDD" id="cd02440">
    <property type="entry name" value="AdoMet_MTases"/>
    <property type="match status" value="1"/>
</dbReference>
<dbReference type="FunFam" id="3.40.50.150:FF:000028">
    <property type="entry name" value="Ubiquinone biosynthesis O-methyltransferase"/>
    <property type="match status" value="1"/>
</dbReference>
<dbReference type="Gene3D" id="3.40.50.150">
    <property type="entry name" value="Vaccinia Virus protein VP39"/>
    <property type="match status" value="1"/>
</dbReference>
<dbReference type="HAMAP" id="MF_00472">
    <property type="entry name" value="UbiG"/>
    <property type="match status" value="1"/>
</dbReference>
<dbReference type="InterPro" id="IPR029063">
    <property type="entry name" value="SAM-dependent_MTases_sf"/>
</dbReference>
<dbReference type="InterPro" id="IPR010233">
    <property type="entry name" value="UbiG_MeTrfase"/>
</dbReference>
<dbReference type="NCBIfam" id="TIGR01983">
    <property type="entry name" value="UbiG"/>
    <property type="match status" value="1"/>
</dbReference>
<dbReference type="PANTHER" id="PTHR43464">
    <property type="entry name" value="METHYLTRANSFERASE"/>
    <property type="match status" value="1"/>
</dbReference>
<dbReference type="PANTHER" id="PTHR43464:SF19">
    <property type="entry name" value="UBIQUINONE BIOSYNTHESIS O-METHYLTRANSFERASE, MITOCHONDRIAL"/>
    <property type="match status" value="1"/>
</dbReference>
<dbReference type="Pfam" id="PF13489">
    <property type="entry name" value="Methyltransf_23"/>
    <property type="match status" value="1"/>
</dbReference>
<dbReference type="SUPFAM" id="SSF53335">
    <property type="entry name" value="S-adenosyl-L-methionine-dependent methyltransferases"/>
    <property type="match status" value="1"/>
</dbReference>
<name>UBIG_SHESW</name>